<protein>
    <recommendedName>
        <fullName>BTB/POZ domain-containing adapter for CUL3-mediated RhoA degradation protein 2</fullName>
        <shortName>hBACURD2</shortName>
    </recommendedName>
    <alternativeName>
        <fullName>BTB/POZ domain-containing protein TNFAIP1</fullName>
    </alternativeName>
    <alternativeName>
        <fullName>Protein B12</fullName>
    </alternativeName>
    <alternativeName>
        <fullName>Tumor necrosis factor, alpha-induced protein 1, endothelial</fullName>
    </alternativeName>
</protein>
<reference key="1">
    <citation type="journal article" date="1992" name="J. Biol. Chem.">
        <title>Characterization of a novel tumor necrosis factor-alpha-induced endothelial primary response gene.</title>
        <authorList>
            <person name="Wolf F.W."/>
            <person name="Marks R.M."/>
            <person name="Sarma V."/>
            <person name="Byers M.G."/>
            <person name="Katz R.W."/>
            <person name="Shows T.B."/>
            <person name="Dixit V.M."/>
        </authorList>
    </citation>
    <scope>NUCLEOTIDE SEQUENCE [MRNA] (ISOFORM 1)</scope>
    <source>
        <tissue>Endothelial cell</tissue>
    </source>
</reference>
<reference key="2">
    <citation type="journal article" date="2004" name="Nat. Genet.">
        <title>Complete sequencing and characterization of 21,243 full-length human cDNAs.</title>
        <authorList>
            <person name="Ota T."/>
            <person name="Suzuki Y."/>
            <person name="Nishikawa T."/>
            <person name="Otsuki T."/>
            <person name="Sugiyama T."/>
            <person name="Irie R."/>
            <person name="Wakamatsu A."/>
            <person name="Hayashi K."/>
            <person name="Sato H."/>
            <person name="Nagai K."/>
            <person name="Kimura K."/>
            <person name="Makita H."/>
            <person name="Sekine M."/>
            <person name="Obayashi M."/>
            <person name="Nishi T."/>
            <person name="Shibahara T."/>
            <person name="Tanaka T."/>
            <person name="Ishii S."/>
            <person name="Yamamoto J."/>
            <person name="Saito K."/>
            <person name="Kawai Y."/>
            <person name="Isono Y."/>
            <person name="Nakamura Y."/>
            <person name="Nagahari K."/>
            <person name="Murakami K."/>
            <person name="Yasuda T."/>
            <person name="Iwayanagi T."/>
            <person name="Wagatsuma M."/>
            <person name="Shiratori A."/>
            <person name="Sudo H."/>
            <person name="Hosoiri T."/>
            <person name="Kaku Y."/>
            <person name="Kodaira H."/>
            <person name="Kondo H."/>
            <person name="Sugawara M."/>
            <person name="Takahashi M."/>
            <person name="Kanda K."/>
            <person name="Yokoi T."/>
            <person name="Furuya T."/>
            <person name="Kikkawa E."/>
            <person name="Omura Y."/>
            <person name="Abe K."/>
            <person name="Kamihara K."/>
            <person name="Katsuta N."/>
            <person name="Sato K."/>
            <person name="Tanikawa M."/>
            <person name="Yamazaki M."/>
            <person name="Ninomiya K."/>
            <person name="Ishibashi T."/>
            <person name="Yamashita H."/>
            <person name="Murakawa K."/>
            <person name="Fujimori K."/>
            <person name="Tanai H."/>
            <person name="Kimata M."/>
            <person name="Watanabe M."/>
            <person name="Hiraoka S."/>
            <person name="Chiba Y."/>
            <person name="Ishida S."/>
            <person name="Ono Y."/>
            <person name="Takiguchi S."/>
            <person name="Watanabe S."/>
            <person name="Yosida M."/>
            <person name="Hotuta T."/>
            <person name="Kusano J."/>
            <person name="Kanehori K."/>
            <person name="Takahashi-Fujii A."/>
            <person name="Hara H."/>
            <person name="Tanase T.-O."/>
            <person name="Nomura Y."/>
            <person name="Togiya S."/>
            <person name="Komai F."/>
            <person name="Hara R."/>
            <person name="Takeuchi K."/>
            <person name="Arita M."/>
            <person name="Imose N."/>
            <person name="Musashino K."/>
            <person name="Yuuki H."/>
            <person name="Oshima A."/>
            <person name="Sasaki N."/>
            <person name="Aotsuka S."/>
            <person name="Yoshikawa Y."/>
            <person name="Matsunawa H."/>
            <person name="Ichihara T."/>
            <person name="Shiohata N."/>
            <person name="Sano S."/>
            <person name="Moriya S."/>
            <person name="Momiyama H."/>
            <person name="Satoh N."/>
            <person name="Takami S."/>
            <person name="Terashima Y."/>
            <person name="Suzuki O."/>
            <person name="Nakagawa S."/>
            <person name="Senoh A."/>
            <person name="Mizoguchi H."/>
            <person name="Goto Y."/>
            <person name="Shimizu F."/>
            <person name="Wakebe H."/>
            <person name="Hishigaki H."/>
            <person name="Watanabe T."/>
            <person name="Sugiyama A."/>
            <person name="Takemoto M."/>
            <person name="Kawakami B."/>
            <person name="Yamazaki M."/>
            <person name="Watanabe K."/>
            <person name="Kumagai A."/>
            <person name="Itakura S."/>
            <person name="Fukuzumi Y."/>
            <person name="Fujimori Y."/>
            <person name="Komiyama M."/>
            <person name="Tashiro H."/>
            <person name="Tanigami A."/>
            <person name="Fujiwara T."/>
            <person name="Ono T."/>
            <person name="Yamada K."/>
            <person name="Fujii Y."/>
            <person name="Ozaki K."/>
            <person name="Hirao M."/>
            <person name="Ohmori Y."/>
            <person name="Kawabata A."/>
            <person name="Hikiji T."/>
            <person name="Kobatake N."/>
            <person name="Inagaki H."/>
            <person name="Ikema Y."/>
            <person name="Okamoto S."/>
            <person name="Okitani R."/>
            <person name="Kawakami T."/>
            <person name="Noguchi S."/>
            <person name="Itoh T."/>
            <person name="Shigeta K."/>
            <person name="Senba T."/>
            <person name="Matsumura K."/>
            <person name="Nakajima Y."/>
            <person name="Mizuno T."/>
            <person name="Morinaga M."/>
            <person name="Sasaki M."/>
            <person name="Togashi T."/>
            <person name="Oyama M."/>
            <person name="Hata H."/>
            <person name="Watanabe M."/>
            <person name="Komatsu T."/>
            <person name="Mizushima-Sugano J."/>
            <person name="Satoh T."/>
            <person name="Shirai Y."/>
            <person name="Takahashi Y."/>
            <person name="Nakagawa K."/>
            <person name="Okumura K."/>
            <person name="Nagase T."/>
            <person name="Nomura N."/>
            <person name="Kikuchi H."/>
            <person name="Masuho Y."/>
            <person name="Yamashita R."/>
            <person name="Nakai K."/>
            <person name="Yada T."/>
            <person name="Nakamura Y."/>
            <person name="Ohara O."/>
            <person name="Isogai T."/>
            <person name="Sugano S."/>
        </authorList>
    </citation>
    <scope>NUCLEOTIDE SEQUENCE [LARGE SCALE MRNA] (ISOFORMS 1 AND 2)</scope>
    <source>
        <tissue>Amygdala</tissue>
    </source>
</reference>
<reference key="3">
    <citation type="submission" date="2004-06" db="EMBL/GenBank/DDBJ databases">
        <title>Cloning of human full open reading frames in Gateway(TM) system entry vector (pDONR201).</title>
        <authorList>
            <person name="Ebert L."/>
            <person name="Schick M."/>
            <person name="Neubert P."/>
            <person name="Schatten R."/>
            <person name="Henze S."/>
            <person name="Korn B."/>
        </authorList>
    </citation>
    <scope>NUCLEOTIDE SEQUENCE [LARGE SCALE MRNA] (ISOFORM 1)</scope>
</reference>
<reference key="4">
    <citation type="submission" date="2004-10" db="EMBL/GenBank/DDBJ databases">
        <title>Cloning of human full-length CDSs in BD Creator(TM) system donor vector.</title>
        <authorList>
            <person name="Kalnine N."/>
            <person name="Chen X."/>
            <person name="Rolfs A."/>
            <person name="Halleck A."/>
            <person name="Hines L."/>
            <person name="Eisenstein S."/>
            <person name="Koundinya M."/>
            <person name="Raphael J."/>
            <person name="Moreira D."/>
            <person name="Kelley T."/>
            <person name="LaBaer J."/>
            <person name="Lin Y."/>
            <person name="Phelan M."/>
            <person name="Farmer A."/>
        </authorList>
    </citation>
    <scope>NUCLEOTIDE SEQUENCE [LARGE SCALE MRNA] (ISOFORM 1)</scope>
</reference>
<reference key="5">
    <citation type="submission" date="2001-12" db="EMBL/GenBank/DDBJ databases">
        <authorList>
            <consortium name="SeattleSNPs variation discovery resource"/>
        </authorList>
    </citation>
    <scope>NUCLEOTIDE SEQUENCE [GENOMIC DNA]</scope>
</reference>
<reference key="6">
    <citation type="journal article" date="2006" name="Nature">
        <title>DNA sequence of human chromosome 17 and analysis of rearrangement in the human lineage.</title>
        <authorList>
            <person name="Zody M.C."/>
            <person name="Garber M."/>
            <person name="Adams D.J."/>
            <person name="Sharpe T."/>
            <person name="Harrow J."/>
            <person name="Lupski J.R."/>
            <person name="Nicholson C."/>
            <person name="Searle S.M."/>
            <person name="Wilming L."/>
            <person name="Young S.K."/>
            <person name="Abouelleil A."/>
            <person name="Allen N.R."/>
            <person name="Bi W."/>
            <person name="Bloom T."/>
            <person name="Borowsky M.L."/>
            <person name="Bugalter B.E."/>
            <person name="Butler J."/>
            <person name="Chang J.L."/>
            <person name="Chen C.-K."/>
            <person name="Cook A."/>
            <person name="Corum B."/>
            <person name="Cuomo C.A."/>
            <person name="de Jong P.J."/>
            <person name="DeCaprio D."/>
            <person name="Dewar K."/>
            <person name="FitzGerald M."/>
            <person name="Gilbert J."/>
            <person name="Gibson R."/>
            <person name="Gnerre S."/>
            <person name="Goldstein S."/>
            <person name="Grafham D.V."/>
            <person name="Grocock R."/>
            <person name="Hafez N."/>
            <person name="Hagopian D.S."/>
            <person name="Hart E."/>
            <person name="Norman C.H."/>
            <person name="Humphray S."/>
            <person name="Jaffe D.B."/>
            <person name="Jones M."/>
            <person name="Kamal M."/>
            <person name="Khodiyar V.K."/>
            <person name="LaButti K."/>
            <person name="Laird G."/>
            <person name="Lehoczky J."/>
            <person name="Liu X."/>
            <person name="Lokyitsang T."/>
            <person name="Loveland J."/>
            <person name="Lui A."/>
            <person name="Macdonald P."/>
            <person name="Major J.E."/>
            <person name="Matthews L."/>
            <person name="Mauceli E."/>
            <person name="McCarroll S.A."/>
            <person name="Mihalev A.H."/>
            <person name="Mudge J."/>
            <person name="Nguyen C."/>
            <person name="Nicol R."/>
            <person name="O'Leary S.B."/>
            <person name="Osoegawa K."/>
            <person name="Schwartz D.C."/>
            <person name="Shaw-Smith C."/>
            <person name="Stankiewicz P."/>
            <person name="Steward C."/>
            <person name="Swarbreck D."/>
            <person name="Venkataraman V."/>
            <person name="Whittaker C.A."/>
            <person name="Yang X."/>
            <person name="Zimmer A.R."/>
            <person name="Bradley A."/>
            <person name="Hubbard T."/>
            <person name="Birren B.W."/>
            <person name="Rogers J."/>
            <person name="Lander E.S."/>
            <person name="Nusbaum C."/>
        </authorList>
    </citation>
    <scope>NUCLEOTIDE SEQUENCE [LARGE SCALE GENOMIC DNA]</scope>
</reference>
<reference key="7">
    <citation type="submission" date="2005-07" db="EMBL/GenBank/DDBJ databases">
        <authorList>
            <person name="Mural R.J."/>
            <person name="Istrail S."/>
            <person name="Sutton G.G."/>
            <person name="Florea L."/>
            <person name="Halpern A.L."/>
            <person name="Mobarry C.M."/>
            <person name="Lippert R."/>
            <person name="Walenz B."/>
            <person name="Shatkay H."/>
            <person name="Dew I."/>
            <person name="Miller J.R."/>
            <person name="Flanigan M.J."/>
            <person name="Edwards N.J."/>
            <person name="Bolanos R."/>
            <person name="Fasulo D."/>
            <person name="Halldorsson B.V."/>
            <person name="Hannenhalli S."/>
            <person name="Turner R."/>
            <person name="Yooseph S."/>
            <person name="Lu F."/>
            <person name="Nusskern D.R."/>
            <person name="Shue B.C."/>
            <person name="Zheng X.H."/>
            <person name="Zhong F."/>
            <person name="Delcher A.L."/>
            <person name="Huson D.H."/>
            <person name="Kravitz S.A."/>
            <person name="Mouchard L."/>
            <person name="Reinert K."/>
            <person name="Remington K.A."/>
            <person name="Clark A.G."/>
            <person name="Waterman M.S."/>
            <person name="Eichler E.E."/>
            <person name="Adams M.D."/>
            <person name="Hunkapiller M.W."/>
            <person name="Myers E.W."/>
            <person name="Venter J.C."/>
        </authorList>
    </citation>
    <scope>NUCLEOTIDE SEQUENCE [LARGE SCALE GENOMIC DNA]</scope>
</reference>
<reference key="8">
    <citation type="journal article" date="2004" name="Genome Res.">
        <title>The status, quality, and expansion of the NIH full-length cDNA project: the Mammalian Gene Collection (MGC).</title>
        <authorList>
            <consortium name="The MGC Project Team"/>
        </authorList>
    </citation>
    <scope>NUCLEOTIDE SEQUENCE [LARGE SCALE MRNA] (ISOFORM 1)</scope>
    <source>
        <tissue>Lung</tissue>
    </source>
</reference>
<reference key="9">
    <citation type="journal article" date="2008" name="Proc. Natl. Acad. Sci. U.S.A.">
        <title>A quantitative atlas of mitotic phosphorylation.</title>
        <authorList>
            <person name="Dephoure N."/>
            <person name="Zhou C."/>
            <person name="Villen J."/>
            <person name="Beausoleil S.A."/>
            <person name="Bakalarski C.E."/>
            <person name="Elledge S.J."/>
            <person name="Gygi S.P."/>
        </authorList>
    </citation>
    <scope>PHOSPHORYLATION [LARGE SCALE ANALYSIS] AT SER-278 AND SER-280</scope>
    <scope>IDENTIFICATION BY MASS SPECTROMETRY [LARGE SCALE ANALYSIS]</scope>
    <source>
        <tissue>Cervix carcinoma</tissue>
    </source>
</reference>
<reference key="10">
    <citation type="journal article" date="2009" name="Int. J. Cancer">
        <title>RhoB induces apoptosis via direct interaction with TNFAIP1 in HeLa cells.</title>
        <authorList>
            <person name="Kim D.M."/>
            <person name="Chung K.S."/>
            <person name="Choi S.J."/>
            <person name="Jung Y.J."/>
            <person name="Park S.K."/>
            <person name="Han G.H."/>
            <person name="Ha J.S."/>
            <person name="Song K.B."/>
            <person name="Choi N.S."/>
            <person name="Kim H.M."/>
            <person name="Won M."/>
            <person name="Seo Y.S."/>
        </authorList>
    </citation>
    <scope>FUNCTION</scope>
    <scope>SUBCELLULAR LOCATION</scope>
    <scope>INTERACTION WITH RHOB</scope>
</reference>
<reference key="11">
    <citation type="journal article" date="2010" name="Mol. Biol. Rep.">
        <title>CK2 phosphorylates TNFAIP1 to affect its subcellular localization and interaction with PCNA.</title>
        <authorList>
            <person name="Yang L."/>
            <person name="Liu N."/>
            <person name="Hu X."/>
            <person name="Zhang W."/>
            <person name="Wang T."/>
            <person name="Li H."/>
            <person name="Zhang B."/>
            <person name="Xiang S."/>
            <person name="Zhou J."/>
            <person name="Zhang J."/>
        </authorList>
    </citation>
    <scope>INTERACTION WITH CSNK2B AND PCNA</scope>
    <scope>PHOSPHORYLATION AT SER-280</scope>
    <scope>SUBCELLULAR LOCATION</scope>
    <scope>MUTAGENESIS OF SER-142; THR-237; SER-265; SER-278 AND SER-280</scope>
</reference>
<reference key="12">
    <citation type="journal article" date="2009" name="Mol. Cell">
        <title>Cullin mediates degradation of RhoA through evolutionarily conserved BTB adaptors to control actin cytoskeleton structure and cell movement.</title>
        <authorList>
            <person name="Chen Y."/>
            <person name="Yang Z."/>
            <person name="Meng M."/>
            <person name="Zhao Y."/>
            <person name="Dong N."/>
            <person name="Yan H."/>
            <person name="Liu L."/>
            <person name="Ding M."/>
            <person name="Peng H.B."/>
            <person name="Shao F."/>
        </authorList>
    </citation>
    <scope>FUNCTION</scope>
    <scope>IDENTIFICATION IN A BCR (BTB-CUL3-RBX1) E3 UBIQUITIN LIGASE COMPLEX</scope>
    <scope>INTERACTION WITH RHOA</scope>
    <scope>MUTAGENESIS OF 71-ILE--ILE-73</scope>
</reference>
<reference key="13">
    <citation type="journal article" date="2010" name="Sci. Signal.">
        <title>Quantitative phosphoproteomics reveals widespread full phosphorylation site occupancy during mitosis.</title>
        <authorList>
            <person name="Olsen J.V."/>
            <person name="Vermeulen M."/>
            <person name="Santamaria A."/>
            <person name="Kumar C."/>
            <person name="Miller M.L."/>
            <person name="Jensen L.J."/>
            <person name="Gnad F."/>
            <person name="Cox J."/>
            <person name="Jensen T.S."/>
            <person name="Nigg E.A."/>
            <person name="Brunak S."/>
            <person name="Mann M."/>
        </authorList>
    </citation>
    <scope>PHOSPHORYLATION [LARGE SCALE ANALYSIS] AT SER-278</scope>
    <scope>IDENTIFICATION BY MASS SPECTROMETRY [LARGE SCALE ANALYSIS]</scope>
    <source>
        <tissue>Cervix carcinoma</tissue>
    </source>
</reference>
<reference key="14">
    <citation type="journal article" date="2013" name="J. Proteome Res.">
        <title>Toward a comprehensive characterization of a human cancer cell phosphoproteome.</title>
        <authorList>
            <person name="Zhou H."/>
            <person name="Di Palma S."/>
            <person name="Preisinger C."/>
            <person name="Peng M."/>
            <person name="Polat A.N."/>
            <person name="Heck A.J."/>
            <person name="Mohammed S."/>
        </authorList>
    </citation>
    <scope>PHOSPHORYLATION [LARGE SCALE ANALYSIS] AT SER-278 AND SER-280</scope>
    <scope>IDENTIFICATION BY MASS SPECTROMETRY [LARGE SCALE ANALYSIS]</scope>
    <source>
        <tissue>Cervix carcinoma</tissue>
        <tissue>Erythroleukemia</tissue>
    </source>
</reference>
<keyword id="KW-0025">Alternative splicing</keyword>
<keyword id="KW-0963">Cytoplasm</keyword>
<keyword id="KW-0967">Endosome</keyword>
<keyword id="KW-0539">Nucleus</keyword>
<keyword id="KW-0597">Phosphoprotein</keyword>
<keyword id="KW-1267">Proteomics identification</keyword>
<keyword id="KW-1185">Reference proteome</keyword>
<keyword id="KW-0833">Ubl conjugation pathway</keyword>
<accession>Q13829</accession>
<accession>B7Z6M4</accession>
<accession>Q5TZQ1</accession>
<comment type="function">
    <text evidence="3 4">Substrate-specific adapter of a BCR (BTB-CUL3-RBX1) E3 ubiquitin-protein ligase complex involved in regulation of cytoskeleton structure. The BCR(TNFAIP1) E3 ubiquitin ligase complex mediates the ubiquitination of RHOA, leading to its degradation by the proteasome, thereby regulating the actin cytoskeleton and cell migration. Its interaction with RHOB may regulate apoptosis. May enhance the PCNA-dependent DNA polymerase delta activity.</text>
</comment>
<comment type="pathway">
    <text>Protein modification; protein ubiquitination.</text>
</comment>
<comment type="subunit">
    <text evidence="3 4 5">Component of the BCR(TNFAIP1) E3 ubiquitin ligase complex, at least composed of CUL3, TNFAIP1/BACURD2 and RBX1. Interacts with RHOA; with a preference for RhoA-GDP. Interacts with RHOB. Interacts with PCNA. Interacts with CSNK2B.</text>
</comment>
<comment type="interaction">
    <interactant intactId="EBI-2505861">
        <id>Q13829</id>
    </interactant>
    <interactant intactId="EBI-1222467">
        <id>P02649</id>
        <label>APOE</label>
    </interactant>
    <organismsDiffer>false</organismsDiffer>
    <experiments>3</experiments>
</comment>
<comment type="interaction">
    <interactant intactId="EBI-2505861">
        <id>Q13829</id>
    </interactant>
    <interactant intactId="EBI-742909">
        <id>Q9H6L4</id>
        <label>ARMC7</label>
    </interactant>
    <organismsDiffer>false</organismsDiffer>
    <experiments>6</experiments>
</comment>
<comment type="interaction">
    <interactant intactId="EBI-2505861">
        <id>Q13829</id>
    </interactant>
    <interactant intactId="EBI-930964">
        <id>P54253</id>
        <label>ATXN1</label>
    </interactant>
    <organismsDiffer>false</organismsDiffer>
    <experiments>3</experiments>
</comment>
<comment type="interaction">
    <interactant intactId="EBI-2505861">
        <id>Q13829</id>
    </interactant>
    <interactant intactId="EBI-10213454">
        <id>Q7Z479</id>
        <label>CAPN7</label>
    </interactant>
    <organismsDiffer>false</organismsDiffer>
    <experiments>3</experiments>
</comment>
<comment type="interaction">
    <interactant intactId="EBI-2505861">
        <id>Q13829</id>
    </interactant>
    <interactant intactId="EBI-1765641">
        <id>Q9Y6W3</id>
        <label>CAPN7</label>
    </interactant>
    <organismsDiffer>false</organismsDiffer>
    <experiments>3</experiments>
</comment>
<comment type="interaction">
    <interactant intactId="EBI-2505861">
        <id>Q13829</id>
    </interactant>
    <interactant intactId="EBI-751319">
        <id>Q9H257</id>
        <label>CARD9</label>
    </interactant>
    <organismsDiffer>false</organismsDiffer>
    <experiments>3</experiments>
</comment>
<comment type="interaction">
    <interactant intactId="EBI-2505861">
        <id>Q13829</id>
    </interactant>
    <interactant intactId="EBI-295634">
        <id>Q16543</id>
        <label>CDC37</label>
    </interactant>
    <organismsDiffer>false</organismsDiffer>
    <experiments>3</experiments>
</comment>
<comment type="interaction">
    <interactant intactId="EBI-2505861">
        <id>Q13829</id>
    </interactant>
    <interactant intactId="EBI-456129">
        <id>Q13618</id>
        <label>CUL3</label>
    </interactant>
    <organismsDiffer>false</organismsDiffer>
    <experiments>6</experiments>
</comment>
<comment type="interaction">
    <interactant intactId="EBI-2505861">
        <id>Q13829</id>
    </interactant>
    <interactant intactId="EBI-6255981">
        <id>Q7L775</id>
        <label>EPM2AIP1</label>
    </interactant>
    <organismsDiffer>false</organismsDiffer>
    <experiments>3</experiments>
</comment>
<comment type="interaction">
    <interactant intactId="EBI-2505861">
        <id>Q13829</id>
    </interactant>
    <interactant intactId="EBI-371876">
        <id>Q9NQT4</id>
        <label>EXOSC5</label>
    </interactant>
    <organismsDiffer>false</organismsDiffer>
    <experiments>6</experiments>
</comment>
<comment type="interaction">
    <interactant intactId="EBI-2505861">
        <id>Q13829</id>
    </interactant>
    <interactant intactId="EBI-852851">
        <id>P01100</id>
        <label>FOS</label>
    </interactant>
    <organismsDiffer>false</organismsDiffer>
    <experiments>3</experiments>
</comment>
<comment type="interaction">
    <interactant intactId="EBI-2505861">
        <id>Q13829</id>
    </interactant>
    <interactant intactId="EBI-2552594">
        <id>P50440</id>
        <label>GATM</label>
    </interactant>
    <organismsDiffer>false</organismsDiffer>
    <experiments>3</experiments>
</comment>
<comment type="interaction">
    <interactant intactId="EBI-2505861">
        <id>Q13829</id>
    </interactant>
    <interactant intactId="EBI-744302">
        <id>P14136</id>
        <label>GFAP</label>
    </interactant>
    <organismsDiffer>false</organismsDiffer>
    <experiments>3</experiments>
</comment>
<comment type="interaction">
    <interactant intactId="EBI-2505861">
        <id>Q13829</id>
    </interactant>
    <interactant intactId="EBI-401755">
        <id>P62993</id>
        <label>GRB2</label>
    </interactant>
    <organismsDiffer>false</organismsDiffer>
    <experiments>3</experiments>
</comment>
<comment type="interaction">
    <interactant intactId="EBI-2505861">
        <id>Q13829</id>
    </interactant>
    <interactant intactId="EBI-2339359">
        <id>O14929</id>
        <label>HAT1</label>
    </interactant>
    <organismsDiffer>false</organismsDiffer>
    <experiments>3</experiments>
</comment>
<comment type="interaction">
    <interactant intactId="EBI-2505861">
        <id>Q13829</id>
    </interactant>
    <interactant intactId="EBI-5460660">
        <id>Q96MH2</id>
        <label>HEXIM2</label>
    </interactant>
    <organismsDiffer>false</organismsDiffer>
    <experiments>3</experiments>
</comment>
<comment type="interaction">
    <interactant intactId="EBI-2505861">
        <id>Q13829</id>
    </interactant>
    <interactant intactId="EBI-466029">
        <id>P42858</id>
        <label>HTT</label>
    </interactant>
    <organismsDiffer>false</organismsDiffer>
    <experiments>3</experiments>
</comment>
<comment type="interaction">
    <interactant intactId="EBI-2505861">
        <id>Q13829</id>
    </interactant>
    <interactant intactId="EBI-1055254">
        <id>Q8WXH2</id>
        <label>JPH3</label>
    </interactant>
    <organismsDiffer>false</organismsDiffer>
    <experiments>3</experiments>
</comment>
<comment type="interaction">
    <interactant intactId="EBI-2505861">
        <id>Q13829</id>
    </interactant>
    <interactant intactId="EBI-2505886">
        <id>Q9H3F6</id>
        <label>KCTD10</label>
    </interactant>
    <organismsDiffer>false</organismsDiffer>
    <experiments>8</experiments>
</comment>
<comment type="interaction">
    <interactant intactId="EBI-2505861">
        <id>Q13829</id>
    </interactant>
    <interactant intactId="EBI-742916">
        <id>Q8WZ19</id>
        <label>KCTD13</label>
    </interactant>
    <organismsDiffer>false</organismsDiffer>
    <experiments>13</experiments>
</comment>
<comment type="interaction">
    <interactant intactId="EBI-2505861">
        <id>Q13829</id>
    </interactant>
    <interactant intactId="EBI-739832">
        <id>Q8TBB1</id>
        <label>LNX1</label>
    </interactant>
    <organismsDiffer>false</organismsDiffer>
    <experiments>3</experiments>
</comment>
<comment type="interaction">
    <interactant intactId="EBI-2505861">
        <id>Q13829</id>
    </interactant>
    <interactant intactId="EBI-741158">
        <id>Q96HA8</id>
        <label>NTAQ1</label>
    </interactant>
    <organismsDiffer>false</organismsDiffer>
    <experiments>3</experiments>
</comment>
<comment type="interaction">
    <interactant intactId="EBI-2505861">
        <id>Q13829</id>
    </interactant>
    <interactant intactId="EBI-398874">
        <id>Q9UBU9</id>
        <label>NXF1</label>
    </interactant>
    <organismsDiffer>false</organismsDiffer>
    <experiments>3</experiments>
</comment>
<comment type="interaction">
    <interactant intactId="EBI-2505861">
        <id>Q13829</id>
    </interactant>
    <interactant intactId="EBI-1055079">
        <id>O15160</id>
        <label>POLR1C</label>
    </interactant>
    <organismsDiffer>false</organismsDiffer>
    <experiments>9</experiments>
</comment>
<comment type="interaction">
    <interactant intactId="EBI-2505861">
        <id>Q13829</id>
    </interactant>
    <interactant intactId="EBI-1181439">
        <id>P54619</id>
        <label>PRKAG1</label>
    </interactant>
    <organismsDiffer>false</organismsDiffer>
    <experiments>3</experiments>
</comment>
<comment type="interaction">
    <interactant intactId="EBI-2505861">
        <id>Q13829</id>
    </interactant>
    <interactant intactId="EBI-359352">
        <id>P25786</id>
        <label>PSMA1</label>
    </interactant>
    <organismsDiffer>false</organismsDiffer>
    <experiments>3</experiments>
</comment>
<comment type="interaction">
    <interactant intactId="EBI-2505861">
        <id>Q13829</id>
    </interactant>
    <interactant intactId="EBI-602647">
        <id>P62745</id>
        <label>RHOB</label>
    </interactant>
    <organismsDiffer>false</organismsDiffer>
    <experiments>5</experiments>
</comment>
<comment type="interaction">
    <interactant intactId="EBI-2505861">
        <id>Q13829</id>
    </interactant>
    <interactant intactId="EBI-990792">
        <id>P00441</id>
        <label>SOD1</label>
    </interactant>
    <organismsDiffer>false</organismsDiffer>
    <experiments>3</experiments>
</comment>
<comment type="interaction">
    <interactant intactId="EBI-2505861">
        <id>Q13829</id>
    </interactant>
    <interactant intactId="EBI-621482">
        <id>P12931</id>
        <label>SRC</label>
    </interactant>
    <organismsDiffer>false</organismsDiffer>
    <experiments>3</experiments>
</comment>
<comment type="interaction">
    <interactant intactId="EBI-2505861">
        <id>Q13829</id>
    </interactant>
    <interactant intactId="EBI-749295">
        <id>O75716</id>
        <label>STK16</label>
    </interactant>
    <organismsDiffer>false</organismsDiffer>
    <experiments>3</experiments>
</comment>
<comment type="interaction">
    <interactant intactId="EBI-2505861">
        <id>Q13829</id>
    </interactant>
    <interactant intactId="EBI-2505861">
        <id>Q13829</id>
        <label>TNFAIP1</label>
    </interactant>
    <organismsDiffer>false</organismsDiffer>
    <experiments>4</experiments>
</comment>
<comment type="interaction">
    <interactant intactId="EBI-2505861">
        <id>Q13829</id>
    </interactant>
    <interactant intactId="EBI-746595">
        <id>Q96E35</id>
        <label>ZMYND19</label>
    </interactant>
    <organismsDiffer>false</organismsDiffer>
    <experiments>3</experiments>
</comment>
<comment type="subcellular location">
    <subcellularLocation>
        <location>Cytoplasm</location>
    </subcellularLocation>
    <subcellularLocation>
        <location>Nucleus</location>
    </subcellularLocation>
    <subcellularLocation>
        <location>Endosome</location>
    </subcellularLocation>
    <text>Colocalizes with RHOB in endosomes.</text>
</comment>
<comment type="alternative products">
    <event type="alternative splicing"/>
    <isoform>
        <id>Q13829-1</id>
        <name>1</name>
        <sequence type="displayed"/>
    </isoform>
    <isoform>
        <id>Q13829-2</id>
        <name>2</name>
        <sequence type="described" ref="VSP_056029"/>
    </isoform>
</comment>
<comment type="induction">
    <text>By TNF, IL1B/interleukin-1 beta and bacterial lipopolysaccharides (LPS).</text>
</comment>
<comment type="PTM">
    <text evidence="5">Phosphorylation at Ser-280 by CK2 facilitates the nucleus localization and increases interaction with PCNA.</text>
</comment>
<comment type="similarity">
    <text evidence="7">Belongs to the BACURD family.</text>
</comment>
<gene>
    <name type="primary">TNFAIP1</name>
    <name type="synonym">BACURD2</name>
    <name type="synonym">EDP1</name>
</gene>
<sequence>MSGDTCLCPASGAKPKLSGFKGGGLGNKYVQLNVGGSLYYTTVRALTRHDTMLKAMFSGRMEVLTDKEGWILIDRCGKHFGTILNYLRDDTITLPQNRQEIKELMAEAKYYLIQGLVNMCQSALQDKKDSYQPVCNIPIITSLKEEERLIESSTKPVVKLLYNRSNNKYSYTSNSDDHLLKNIELFDKLSLRFNGRVLFIKDVIGDEICCWSFYGQGRKLAEVCCTSIVYATEKKQTKVEFPEARIYEETLNVLLYETPRVPDNSLLEATSRSRSQASPSEDEETFELRDRVRRIHVKRYSTYDDRQLGHQSTHRD</sequence>
<evidence type="ECO:0000255" key="1">
    <source>
        <dbReference type="PROSITE-ProRule" id="PRU00037"/>
    </source>
</evidence>
<evidence type="ECO:0000256" key="2">
    <source>
        <dbReference type="SAM" id="MobiDB-lite"/>
    </source>
</evidence>
<evidence type="ECO:0000269" key="3">
    <source>
    </source>
</evidence>
<evidence type="ECO:0000269" key="4">
    <source>
    </source>
</evidence>
<evidence type="ECO:0000269" key="5">
    <source>
    </source>
</evidence>
<evidence type="ECO:0000303" key="6">
    <source>
    </source>
</evidence>
<evidence type="ECO:0000305" key="7"/>
<evidence type="ECO:0007744" key="8">
    <source>
    </source>
</evidence>
<evidence type="ECO:0007744" key="9">
    <source>
    </source>
</evidence>
<evidence type="ECO:0007744" key="10">
    <source>
    </source>
</evidence>
<name>BACD2_HUMAN</name>
<organism>
    <name type="scientific">Homo sapiens</name>
    <name type="common">Human</name>
    <dbReference type="NCBI Taxonomy" id="9606"/>
    <lineage>
        <taxon>Eukaryota</taxon>
        <taxon>Metazoa</taxon>
        <taxon>Chordata</taxon>
        <taxon>Craniata</taxon>
        <taxon>Vertebrata</taxon>
        <taxon>Euteleostomi</taxon>
        <taxon>Mammalia</taxon>
        <taxon>Eutheria</taxon>
        <taxon>Euarchontoglires</taxon>
        <taxon>Primates</taxon>
        <taxon>Haplorrhini</taxon>
        <taxon>Catarrhini</taxon>
        <taxon>Hominidae</taxon>
        <taxon>Homo</taxon>
    </lineage>
</organism>
<feature type="chain" id="PRO_0000191300" description="BTB/POZ domain-containing adapter for CUL3-mediated RhoA degradation protein 2">
    <location>
        <begin position="1"/>
        <end position="316"/>
    </location>
</feature>
<feature type="domain" description="BTB" evidence="1">
    <location>
        <begin position="28"/>
        <end position="96"/>
    </location>
</feature>
<feature type="region of interest" description="Disordered" evidence="2">
    <location>
        <begin position="268"/>
        <end position="287"/>
    </location>
</feature>
<feature type="compositionally biased region" description="Polar residues" evidence="2">
    <location>
        <begin position="268"/>
        <end position="279"/>
    </location>
</feature>
<feature type="modified residue" description="Phosphoserine" evidence="8 9 10">
    <location>
        <position position="278"/>
    </location>
</feature>
<feature type="modified residue" description="Phosphoserine; by CK2" evidence="5 8 10">
    <location>
        <position position="280"/>
    </location>
</feature>
<feature type="splice variant" id="VSP_056029" description="In isoform 2." evidence="6">
    <location>
        <begin position="1"/>
        <end position="104"/>
    </location>
</feature>
<feature type="mutagenesis site" description="Abolishes interaction with CUL3 and induces abnormal actin stress fibers." evidence="4">
    <original>ILI</original>
    <variation>AAA</variation>
    <location>
        <begin position="71"/>
        <end position="73"/>
    </location>
</feature>
<feature type="mutagenesis site" description="Does not affect phosphorylation level; when associated with A-237." evidence="5">
    <original>S</original>
    <variation>A</variation>
    <location>
        <position position="142"/>
    </location>
</feature>
<feature type="mutagenesis site" description="Does not affect phosphorylation level; when associated with A-142." evidence="5">
    <original>T</original>
    <variation>A</variation>
    <location>
        <position position="237"/>
    </location>
</feature>
<feature type="mutagenesis site" description="Does not affect phosphorylation level." evidence="5">
    <original>S</original>
    <variation>A</variation>
    <location>
        <position position="265"/>
    </location>
</feature>
<feature type="mutagenesis site" description="Slightly impairs phosphorylation level." evidence="5">
    <original>S</original>
    <variation>A</variation>
    <location>
        <position position="278"/>
    </location>
</feature>
<feature type="mutagenesis site" description="Strongly impairs phosphorylation level." evidence="5">
    <original>S</original>
    <variation>A</variation>
    <location>
        <position position="280"/>
    </location>
</feature>
<proteinExistence type="evidence at protein level"/>
<dbReference type="EMBL" id="M80783">
    <property type="protein sequence ID" value="AAA58385.1"/>
    <property type="molecule type" value="mRNA"/>
</dbReference>
<dbReference type="EMBL" id="AK300584">
    <property type="protein sequence ID" value="BAH13310.1"/>
    <property type="molecule type" value="mRNA"/>
</dbReference>
<dbReference type="EMBL" id="AK312387">
    <property type="protein sequence ID" value="BAG35304.1"/>
    <property type="molecule type" value="mRNA"/>
</dbReference>
<dbReference type="EMBL" id="CR456819">
    <property type="protein sequence ID" value="CAG33100.1"/>
    <property type="molecule type" value="mRNA"/>
</dbReference>
<dbReference type="EMBL" id="BT020121">
    <property type="protein sequence ID" value="AAV38924.1"/>
    <property type="molecule type" value="mRNA"/>
</dbReference>
<dbReference type="EMBL" id="AY065346">
    <property type="protein sequence ID" value="AAL38649.1"/>
    <property type="molecule type" value="Genomic_DNA"/>
</dbReference>
<dbReference type="EMBL" id="AC002094">
    <property type="status" value="NOT_ANNOTATED_CDS"/>
    <property type="molecule type" value="Genomic_DNA"/>
</dbReference>
<dbReference type="EMBL" id="CH471159">
    <property type="protein sequence ID" value="EAW51077.1"/>
    <property type="molecule type" value="Genomic_DNA"/>
</dbReference>
<dbReference type="EMBL" id="BC001643">
    <property type="protein sequence ID" value="AAH01643.1"/>
    <property type="molecule type" value="mRNA"/>
</dbReference>
<dbReference type="EMBL" id="BC001949">
    <property type="protein sequence ID" value="AAH01949.1"/>
    <property type="molecule type" value="mRNA"/>
</dbReference>
<dbReference type="CCDS" id="CCDS11227.1">
    <molecule id="Q13829-1"/>
</dbReference>
<dbReference type="RefSeq" id="NP_066960.1">
    <molecule id="Q13829-1"/>
    <property type="nucleotide sequence ID" value="NM_021137.5"/>
</dbReference>
<dbReference type="SMR" id="Q13829"/>
<dbReference type="BioGRID" id="112981">
    <property type="interactions" value="88"/>
</dbReference>
<dbReference type="FunCoup" id="Q13829">
    <property type="interactions" value="1036"/>
</dbReference>
<dbReference type="IntAct" id="Q13829">
    <property type="interactions" value="77"/>
</dbReference>
<dbReference type="MINT" id="Q13829"/>
<dbReference type="STRING" id="9606.ENSP00000226225"/>
<dbReference type="iPTMnet" id="Q13829"/>
<dbReference type="PhosphoSitePlus" id="Q13829"/>
<dbReference type="BioMuta" id="TNFAIP1"/>
<dbReference type="DMDM" id="2833248"/>
<dbReference type="jPOST" id="Q13829"/>
<dbReference type="MassIVE" id="Q13829"/>
<dbReference type="PaxDb" id="9606-ENSP00000226225"/>
<dbReference type="PeptideAtlas" id="Q13829"/>
<dbReference type="ProteomicsDB" id="59698">
    <molecule id="Q13829-1"/>
</dbReference>
<dbReference type="ProteomicsDB" id="6790"/>
<dbReference type="Pumba" id="Q13829"/>
<dbReference type="Antibodypedia" id="2839">
    <property type="antibodies" value="287 antibodies from 32 providers"/>
</dbReference>
<dbReference type="DNASU" id="7126"/>
<dbReference type="Ensembl" id="ENST00000226225.7">
    <molecule id="Q13829-1"/>
    <property type="protein sequence ID" value="ENSP00000226225.2"/>
    <property type="gene ID" value="ENSG00000109079.10"/>
</dbReference>
<dbReference type="Ensembl" id="ENST00000544907.6">
    <molecule id="Q13829-2"/>
    <property type="protein sequence ID" value="ENSP00000440749.2"/>
    <property type="gene ID" value="ENSG00000109079.10"/>
</dbReference>
<dbReference type="GeneID" id="7126"/>
<dbReference type="KEGG" id="hsa:7126"/>
<dbReference type="MANE-Select" id="ENST00000226225.7">
    <property type="protein sequence ID" value="ENSP00000226225.2"/>
    <property type="RefSeq nucleotide sequence ID" value="NM_021137.5"/>
    <property type="RefSeq protein sequence ID" value="NP_066960.1"/>
</dbReference>
<dbReference type="UCSC" id="uc002hay.4">
    <molecule id="Q13829-1"/>
    <property type="organism name" value="human"/>
</dbReference>
<dbReference type="AGR" id="HGNC:11894"/>
<dbReference type="CTD" id="7126"/>
<dbReference type="DisGeNET" id="7126"/>
<dbReference type="GeneCards" id="TNFAIP1"/>
<dbReference type="HGNC" id="HGNC:11894">
    <property type="gene designation" value="TNFAIP1"/>
</dbReference>
<dbReference type="HPA" id="ENSG00000109079">
    <property type="expression patterns" value="Low tissue specificity"/>
</dbReference>
<dbReference type="MIM" id="191161">
    <property type="type" value="gene"/>
</dbReference>
<dbReference type="neXtProt" id="NX_Q13829"/>
<dbReference type="OpenTargets" id="ENSG00000109079"/>
<dbReference type="PharmGKB" id="PA36591"/>
<dbReference type="VEuPathDB" id="HostDB:ENSG00000109079"/>
<dbReference type="eggNOG" id="KOG2716">
    <property type="taxonomic scope" value="Eukaryota"/>
</dbReference>
<dbReference type="GeneTree" id="ENSGT00950000183143"/>
<dbReference type="HOGENOM" id="CLU_060008_2_0_1"/>
<dbReference type="InParanoid" id="Q13829"/>
<dbReference type="OMA" id="EMSGDTC"/>
<dbReference type="OrthoDB" id="2333377at2759"/>
<dbReference type="PAN-GO" id="Q13829">
    <property type="GO annotations" value="5 GO annotations based on evolutionary models"/>
</dbReference>
<dbReference type="PhylomeDB" id="Q13829"/>
<dbReference type="TreeFam" id="TF315649"/>
<dbReference type="PathwayCommons" id="Q13829"/>
<dbReference type="Reactome" id="R-HSA-9696264">
    <property type="pathway name" value="RND3 GTPase cycle"/>
</dbReference>
<dbReference type="Reactome" id="R-HSA-9696270">
    <property type="pathway name" value="RND2 GTPase cycle"/>
</dbReference>
<dbReference type="SignaLink" id="Q13829"/>
<dbReference type="SIGNOR" id="Q13829"/>
<dbReference type="UniPathway" id="UPA00143"/>
<dbReference type="BioGRID-ORCS" id="7126">
    <property type="hits" value="17 hits in 1192 CRISPR screens"/>
</dbReference>
<dbReference type="ChiTaRS" id="TNFAIP1">
    <property type="organism name" value="human"/>
</dbReference>
<dbReference type="GeneWiki" id="TNFAIP1"/>
<dbReference type="GenomeRNAi" id="7126"/>
<dbReference type="Pharos" id="Q13829">
    <property type="development level" value="Tbio"/>
</dbReference>
<dbReference type="PRO" id="PR:Q13829"/>
<dbReference type="Proteomes" id="UP000005640">
    <property type="component" value="Chromosome 17"/>
</dbReference>
<dbReference type="RNAct" id="Q13829">
    <property type="molecule type" value="protein"/>
</dbReference>
<dbReference type="Bgee" id="ENSG00000109079">
    <property type="expression patterns" value="Expressed in hair follicle and 211 other cell types or tissues"/>
</dbReference>
<dbReference type="ExpressionAtlas" id="Q13829">
    <property type="expression patterns" value="baseline and differential"/>
</dbReference>
<dbReference type="GO" id="GO:0031463">
    <property type="term" value="C:Cul3-RING ubiquitin ligase complex"/>
    <property type="evidence" value="ECO:0000314"/>
    <property type="project" value="UniProtKB"/>
</dbReference>
<dbReference type="GO" id="GO:0005737">
    <property type="term" value="C:cytoplasm"/>
    <property type="evidence" value="ECO:0000314"/>
    <property type="project" value="UniProtKB"/>
</dbReference>
<dbReference type="GO" id="GO:0005829">
    <property type="term" value="C:cytosol"/>
    <property type="evidence" value="ECO:0000304"/>
    <property type="project" value="Reactome"/>
</dbReference>
<dbReference type="GO" id="GO:0005768">
    <property type="term" value="C:endosome"/>
    <property type="evidence" value="ECO:0000314"/>
    <property type="project" value="UniProtKB"/>
</dbReference>
<dbReference type="GO" id="GO:0005634">
    <property type="term" value="C:nucleus"/>
    <property type="evidence" value="ECO:0007669"/>
    <property type="project" value="UniProtKB-SubCell"/>
</dbReference>
<dbReference type="GO" id="GO:0030332">
    <property type="term" value="F:cyclin binding"/>
    <property type="evidence" value="ECO:0007669"/>
    <property type="project" value="Ensembl"/>
</dbReference>
<dbReference type="GO" id="GO:0042802">
    <property type="term" value="F:identical protein binding"/>
    <property type="evidence" value="ECO:0000353"/>
    <property type="project" value="IntAct"/>
</dbReference>
<dbReference type="GO" id="GO:0031267">
    <property type="term" value="F:small GTPase binding"/>
    <property type="evidence" value="ECO:0000314"/>
    <property type="project" value="UniProtKB"/>
</dbReference>
<dbReference type="GO" id="GO:0006915">
    <property type="term" value="P:apoptotic process"/>
    <property type="evidence" value="ECO:0000304"/>
    <property type="project" value="UniProtKB"/>
</dbReference>
<dbReference type="GO" id="GO:0016477">
    <property type="term" value="P:cell migration"/>
    <property type="evidence" value="ECO:0000315"/>
    <property type="project" value="UniProtKB"/>
</dbReference>
<dbReference type="GO" id="GO:0006955">
    <property type="term" value="P:immune response"/>
    <property type="evidence" value="ECO:0000270"/>
    <property type="project" value="UniProtKB"/>
</dbReference>
<dbReference type="GO" id="GO:0035024">
    <property type="term" value="P:negative regulation of Rho protein signal transduction"/>
    <property type="evidence" value="ECO:0000315"/>
    <property type="project" value="UniProtKB"/>
</dbReference>
<dbReference type="GO" id="GO:0045740">
    <property type="term" value="P:positive regulation of DNA replication"/>
    <property type="evidence" value="ECO:0007669"/>
    <property type="project" value="Ensembl"/>
</dbReference>
<dbReference type="GO" id="GO:0043161">
    <property type="term" value="P:proteasome-mediated ubiquitin-dependent protein catabolic process"/>
    <property type="evidence" value="ECO:0000314"/>
    <property type="project" value="UniProtKB"/>
</dbReference>
<dbReference type="GO" id="GO:0051260">
    <property type="term" value="P:protein homooligomerization"/>
    <property type="evidence" value="ECO:0007669"/>
    <property type="project" value="InterPro"/>
</dbReference>
<dbReference type="GO" id="GO:0016567">
    <property type="term" value="P:protein ubiquitination"/>
    <property type="evidence" value="ECO:0000314"/>
    <property type="project" value="UniProtKB"/>
</dbReference>
<dbReference type="GO" id="GO:0043149">
    <property type="term" value="P:stress fiber assembly"/>
    <property type="evidence" value="ECO:0000315"/>
    <property type="project" value="UniProtKB"/>
</dbReference>
<dbReference type="CDD" id="cd18401">
    <property type="entry name" value="BTB_POZ_TNFAIP1_BACURD2"/>
    <property type="match status" value="1"/>
</dbReference>
<dbReference type="FunFam" id="3.30.710.10:FF:000013">
    <property type="entry name" value="BTB/POZ domain-containing adapter for CUL3-mediated RhoA degradation protein 3"/>
    <property type="match status" value="1"/>
</dbReference>
<dbReference type="Gene3D" id="3.30.710.10">
    <property type="entry name" value="Potassium Channel Kv1.1, Chain A"/>
    <property type="match status" value="1"/>
</dbReference>
<dbReference type="InterPro" id="IPR045068">
    <property type="entry name" value="BACURD1-3"/>
</dbReference>
<dbReference type="InterPro" id="IPR000210">
    <property type="entry name" value="BTB/POZ_dom"/>
</dbReference>
<dbReference type="InterPro" id="IPR011333">
    <property type="entry name" value="SKP1/BTB/POZ_sf"/>
</dbReference>
<dbReference type="InterPro" id="IPR003131">
    <property type="entry name" value="T1-type_BTB"/>
</dbReference>
<dbReference type="PANTHER" id="PTHR11145">
    <property type="entry name" value="BTB/POZ DOMAIN-CONTAINING ADAPTER FOR CUL3-MEDIATED RHOA DEGRADATION PROTEIN FAMILY MEMBER"/>
    <property type="match status" value="1"/>
</dbReference>
<dbReference type="PANTHER" id="PTHR11145:SF17">
    <property type="entry name" value="BTB_POZ DOMAIN-CONTAINING ADAPTER FOR CUL3-MEDIATED RHOA DEGRADATION PROTEIN 2"/>
    <property type="match status" value="1"/>
</dbReference>
<dbReference type="Pfam" id="PF02214">
    <property type="entry name" value="BTB_2"/>
    <property type="match status" value="1"/>
</dbReference>
<dbReference type="SMART" id="SM00225">
    <property type="entry name" value="BTB"/>
    <property type="match status" value="1"/>
</dbReference>
<dbReference type="SUPFAM" id="SSF54695">
    <property type="entry name" value="POZ domain"/>
    <property type="match status" value="1"/>
</dbReference>
<dbReference type="PROSITE" id="PS50097">
    <property type="entry name" value="BTB"/>
    <property type="match status" value="1"/>
</dbReference>